<dbReference type="EC" id="3.5.2.6"/>
<dbReference type="EMBL" id="X04515">
    <property type="protein sequence ID" value="CAA28198.1"/>
    <property type="molecule type" value="Genomic_DNA"/>
</dbReference>
<dbReference type="PIR" id="A24469">
    <property type="entry name" value="A24469"/>
</dbReference>
<dbReference type="RefSeq" id="WP_063860799.1">
    <property type="nucleotide sequence ID" value="NG_049268.1"/>
</dbReference>
<dbReference type="SMR" id="P05192"/>
<dbReference type="CARD" id="ARO:3002454">
    <property type="molecule name" value="LEN-1"/>
    <property type="mechanism identifier" value="ARO:0001004"/>
    <property type="mechanism name" value="antibiotic inactivation"/>
</dbReference>
<dbReference type="KEGG" id="ag:CAA28198"/>
<dbReference type="GO" id="GO:0008800">
    <property type="term" value="F:beta-lactamase activity"/>
    <property type="evidence" value="ECO:0007669"/>
    <property type="project" value="UniProtKB-EC"/>
</dbReference>
<dbReference type="GO" id="GO:0030655">
    <property type="term" value="P:beta-lactam antibiotic catabolic process"/>
    <property type="evidence" value="ECO:0007669"/>
    <property type="project" value="InterPro"/>
</dbReference>
<dbReference type="GO" id="GO:0046677">
    <property type="term" value="P:response to antibiotic"/>
    <property type="evidence" value="ECO:0007669"/>
    <property type="project" value="UniProtKB-KW"/>
</dbReference>
<dbReference type="Gene3D" id="3.40.710.10">
    <property type="entry name" value="DD-peptidase/beta-lactamase superfamily"/>
    <property type="match status" value="1"/>
</dbReference>
<dbReference type="InterPro" id="IPR012338">
    <property type="entry name" value="Beta-lactam/transpept-like"/>
</dbReference>
<dbReference type="InterPro" id="IPR045155">
    <property type="entry name" value="Beta-lactam_cat"/>
</dbReference>
<dbReference type="InterPro" id="IPR000871">
    <property type="entry name" value="Beta-lactam_class-A"/>
</dbReference>
<dbReference type="InterPro" id="IPR023650">
    <property type="entry name" value="Beta-lactam_class-A_AS"/>
</dbReference>
<dbReference type="NCBIfam" id="NF033103">
    <property type="entry name" value="bla_class_A"/>
    <property type="match status" value="1"/>
</dbReference>
<dbReference type="NCBIfam" id="NF000233">
    <property type="entry name" value="LEN"/>
    <property type="match status" value="1"/>
</dbReference>
<dbReference type="NCBIfam" id="NF012143">
    <property type="entry name" value="SHV_LEN_OKP"/>
    <property type="match status" value="1"/>
</dbReference>
<dbReference type="PANTHER" id="PTHR35333">
    <property type="entry name" value="BETA-LACTAMASE"/>
    <property type="match status" value="1"/>
</dbReference>
<dbReference type="PANTHER" id="PTHR35333:SF3">
    <property type="entry name" value="BETA-LACTAMASE-TYPE TRANSPEPTIDASE FOLD CONTAINING PROTEIN"/>
    <property type="match status" value="1"/>
</dbReference>
<dbReference type="Pfam" id="PF13354">
    <property type="entry name" value="Beta-lactamase2"/>
    <property type="match status" value="1"/>
</dbReference>
<dbReference type="PRINTS" id="PR00118">
    <property type="entry name" value="BLACTAMASEA"/>
</dbReference>
<dbReference type="SUPFAM" id="SSF56601">
    <property type="entry name" value="beta-lactamase/transpeptidase-like"/>
    <property type="match status" value="1"/>
</dbReference>
<dbReference type="PROSITE" id="PS00146">
    <property type="entry name" value="BETA_LACTAMASE_A"/>
    <property type="match status" value="1"/>
</dbReference>
<organism>
    <name type="scientific">Klebsiella pneumoniae</name>
    <dbReference type="NCBI Taxonomy" id="573"/>
    <lineage>
        <taxon>Bacteria</taxon>
        <taxon>Pseudomonadati</taxon>
        <taxon>Pseudomonadota</taxon>
        <taxon>Gammaproteobacteria</taxon>
        <taxon>Enterobacterales</taxon>
        <taxon>Enterobacteriaceae</taxon>
        <taxon>Klebsiella/Raoultella group</taxon>
        <taxon>Klebsiella</taxon>
        <taxon>Klebsiella pneumoniae complex</taxon>
    </lineage>
</organism>
<comment type="catalytic activity">
    <reaction evidence="2">
        <text>a beta-lactam + H2O = a substituted beta-amino acid</text>
        <dbReference type="Rhea" id="RHEA:20401"/>
        <dbReference type="ChEBI" id="CHEBI:15377"/>
        <dbReference type="ChEBI" id="CHEBI:35627"/>
        <dbReference type="ChEBI" id="CHEBI:140347"/>
        <dbReference type="EC" id="3.5.2.6"/>
    </reaction>
</comment>
<comment type="miscellaneous">
    <text evidence="4">The class A beta-lactamase family has a specific amino-acid numbering system, sometimes called Ambler or ABL numbering and often misspelt as Amber. A multiple sequence alignment was used to derive a consensus sequence and then the consensus was numbered taking into account insertions and deletions. This allows use of identical numbers, e.g. for active site residues, despite differences in protein length. UniProt always uses natural numbering of residues, hence there appear to be differences in numbering between this entry and some papers.</text>
</comment>
<comment type="similarity">
    <text evidence="3">Belongs to the class-A beta-lactamase family.</text>
</comment>
<proteinExistence type="inferred from homology"/>
<protein>
    <recommendedName>
        <fullName>Beta-lactamase</fullName>
        <ecNumber>3.5.2.6</ecNumber>
    </recommendedName>
    <alternativeName>
        <fullName>Penicillinase</fullName>
    </alternativeName>
</protein>
<reference key="1">
    <citation type="journal article" date="1986" name="FEBS Lett.">
        <title>Close evolutionary relationship between the chromosomally encoded beta-lactamase gene of Klebsiella pneumoniae and the TEM beta-lactamase gene mediated by R plasmids.</title>
        <authorList>
            <person name="Arakawa Y."/>
            <person name="Ohta M."/>
            <person name="Kido N."/>
            <person name="Fujii Y."/>
            <person name="Komatsu T."/>
            <person name="Kato N."/>
        </authorList>
    </citation>
    <scope>NUCLEOTIDE SEQUENCE [GENOMIC DNA]</scope>
    <source>
        <strain>LEN-1</strain>
    </source>
</reference>
<reference key="2">
    <citation type="journal article" date="1991" name="Biochem. J.">
        <title>A standard numbering scheme for the class A beta-lactamases.</title>
        <authorList>
            <person name="Ambler R.P."/>
            <person name="Coulson A.F."/>
            <person name="Frere J.M."/>
            <person name="Ghuysen J.M."/>
            <person name="Joris B."/>
            <person name="Forsman M."/>
            <person name="Levesque R.C."/>
            <person name="Tiraby G."/>
            <person name="Waley S.G."/>
        </authorList>
    </citation>
    <scope>AMINO ACID NUMBERING SCHEME</scope>
</reference>
<sequence>MRYVRLCVISLLATLPLVVYAGPQPLEQIKQSESQLSGRVGMVEMDLANGRTLAAWRADERFPMVSTFKVLLCGAVLARVDAGLEQLDRRIHYRQQDLVDYSPVSEKHLVDGMTIGELCAAAITLSDNSAGNLLLATVGGPAGLTAFLRQIGDNVTRLDRWETALNEALPGDARDTTTPASMAATLRKLLTAQHLSARSQQQLLQWMVDDRVAGPLIRAVLPPGWFIADKTGAGERGARGIVALLGPDGKPERIVVIYLRDTPASMAERNQHIAGIGQR</sequence>
<keyword id="KW-0046">Antibiotic resistance</keyword>
<keyword id="KW-1015">Disulfide bond</keyword>
<keyword id="KW-0378">Hydrolase</keyword>
<keyword id="KW-0732">Signal</keyword>
<name>BLAC_KLEPN</name>
<accession>P05192</accession>
<feature type="signal peptide">
    <location>
        <begin position="1"/>
        <end position="21"/>
    </location>
</feature>
<feature type="chain" id="PRO_0000016999" description="Beta-lactamase">
    <location>
        <begin position="22"/>
        <end position="279"/>
    </location>
</feature>
<feature type="active site" description="Acyl-ester intermediate" evidence="2">
    <location>
        <position position="66"/>
    </location>
</feature>
<feature type="binding site" evidence="1">
    <location>
        <begin position="230"/>
        <end position="232"/>
    </location>
    <ligand>
        <name>substrate</name>
    </ligand>
</feature>
<feature type="disulfide bond" evidence="1">
    <location>
        <begin position="73"/>
        <end position="119"/>
    </location>
</feature>
<evidence type="ECO:0000250" key="1"/>
<evidence type="ECO:0000255" key="2">
    <source>
        <dbReference type="PROSITE-ProRule" id="PRU10101"/>
    </source>
</evidence>
<evidence type="ECO:0000305" key="3"/>
<evidence type="ECO:0000305" key="4">
    <source>
    </source>
</evidence>